<name>ALS4_CANAX</name>
<reference key="1">
    <citation type="journal article" date="1998" name="J. Bacteriol.">
        <title>Identification of Candida albicans ALS2 and ALS4 and localization of als proteins to the fungal cell surface.</title>
        <authorList>
            <person name="Hoyer L.L."/>
            <person name="Payne T.L."/>
            <person name="Hecht J.E."/>
        </authorList>
    </citation>
    <scope>NUCLEOTIDE SEQUENCE [GENOMIC DNA]</scope>
    <scope>VARIANTS</scope>
    <source>
        <strain>1161</strain>
    </source>
</reference>
<organism>
    <name type="scientific">Candida albicans</name>
    <name type="common">Yeast</name>
    <dbReference type="NCBI Taxonomy" id="5476"/>
    <lineage>
        <taxon>Eukaryota</taxon>
        <taxon>Fungi</taxon>
        <taxon>Dikarya</taxon>
        <taxon>Ascomycota</taxon>
        <taxon>Saccharomycotina</taxon>
        <taxon>Pichiomycetes</taxon>
        <taxon>Debaryomycetaceae</taxon>
        <taxon>Candida/Lodderomyces clade</taxon>
        <taxon>Candida</taxon>
    </lineage>
</organism>
<sequence>MLLQFLLLSLCVSVATAKVITGVFNSFNSLTWANAASYPYRGPATPTWTAVIGWSLDGATASAGDTFTLDMPCVFKFITDQTSIDLVADGRTYATCNLNSAEEFTTFSSVSCTVTTTMTADTKAIGTVTLPFSFSVGGSGSDVDLANSQCFTAGINTVTFNDGDTSISTTVDFEKSTVASSDRILLSRILPSLSQAVNLFLPQECANGYTSGTMGFSTAGTGATIDCSTVHVGISNGLNDWNYPISSESFSYTKTCTSTSVLVTFQNVPAGYRPFVDAYISATRVSSYTMQYTNIYACVGAASVDDSFTHTWRGYSNSQAGSNGITIVVTTRTVTDSTTAVTTLPFNSDTDKTKTIEILQPIPTTTITTSYVGVTTSYSTKTAPIGETATVIVDVPYHTTTTVTSEWTGTITTTTTRTNPTDSIDTVVVQVPSPNPTVTTTEYWSQSYATTTTVTAPPGGTDSVIIREPPNPTVTTTEYWSQSYATTLTITAPPGGTNSVIIRVHSSTNDESSESTFSTLSVPSFSGSISIVSTVSRPHYVNSTVTHLPSSSSKPVDIPSSDVVTSTNDNSLTSLTGSENGKTSVAISTTFCDDENGCQTSIPQGSVVRTTATTTATTTTIIGDNNGSGKSKSGELSSTGSVTTNTATPDVPSTKVPSNPGAPGTGVPPPLAPSTETQTTNNVPGSPNIPATGTTDIRESTTVSHTVTGNGNTGVPMNPNPALTTSTSLTGATNSATNPSHETGVNTGSGGSTNIVTPPSSATATVVIPGTDNGATTKGQDTAGGGNSNGSTATTNIQGGNNEPGNQPGTNTTGEPVGTTDTQSVESISQPTTLSQQTTSSLISTPLASTFDGSGSIVQHSAWLYVLLTAISIFF</sequence>
<proteinExistence type="inferred from homology"/>
<comment type="function">
    <text evidence="2">Cell surface adhesion protein which mediates both yeast-to-host tissue adherence and yeast aggregation. Plays an important role in the pathogenesis of C.albicans infections.</text>
</comment>
<comment type="subcellular location">
    <subcellularLocation>
        <location>Cell membrane</location>
        <topology evidence="2">Lipid-anchor</topology>
        <topology evidence="2">GPI-anchor</topology>
    </subcellularLocation>
    <subcellularLocation>
        <location evidence="2">Secreted</location>
        <location evidence="2">Cell wall</location>
    </subcellularLocation>
    <text evidence="2">Identified as covalently-linked GPI-modified cell wall protein (GPI-CWP) in the outer cell wall layer. Covers the surface of yeast-form cells.</text>
</comment>
<comment type="domain">
    <text evidence="2">Each ALS protein has a similar three-domain structure, including a N-ter domain of 433-436 amino acids that is 55-90 percent identical across the family and which mediates adherence to various materials; a central domain of variable numbers of tandemly repeated copies of a 36 amino acid motif; and a C-ter; domain that is relatively variable in length and sequence across the family.</text>
</comment>
<comment type="PTM">
    <text evidence="7">N-glycosylated and O-glycosylated.</text>
</comment>
<comment type="similarity">
    <text evidence="7">Belongs to the ALS family.</text>
</comment>
<protein>
    <recommendedName>
        <fullName>Agglutinin-like protein 4</fullName>
    </recommendedName>
    <alternativeName>
        <fullName>Adhesin 4</fullName>
    </alternativeName>
</protein>
<keyword id="KW-0130">Cell adhesion</keyword>
<keyword id="KW-1003">Cell membrane</keyword>
<keyword id="KW-0134">Cell wall</keyword>
<keyword id="KW-1015">Disulfide bond</keyword>
<keyword id="KW-0325">Glycoprotein</keyword>
<keyword id="KW-0336">GPI-anchor</keyword>
<keyword id="KW-0449">Lipoprotein</keyword>
<keyword id="KW-0472">Membrane</keyword>
<keyword id="KW-0677">Repeat</keyword>
<keyword id="KW-0964">Secreted</keyword>
<keyword id="KW-0732">Signal</keyword>
<keyword id="KW-0843">Virulence</keyword>
<dbReference type="EMBL" id="AH006929">
    <property type="protein sequence ID" value="AAC64239.1"/>
    <property type="molecule type" value="Genomic_DNA"/>
</dbReference>
<dbReference type="EMBL" id="AH006929">
    <property type="protein sequence ID" value="AAC64240.1"/>
    <property type="molecule type" value="Genomic_DNA"/>
</dbReference>
<dbReference type="EMBL" id="AH006930">
    <property type="protein sequence ID" value="AAC64241.1"/>
    <property type="molecule type" value="Genomic_DNA"/>
</dbReference>
<dbReference type="EMBL" id="AH006930">
    <property type="protein sequence ID" value="AAC64242.1"/>
    <property type="molecule type" value="Genomic_DNA"/>
</dbReference>
<dbReference type="SMR" id="O74660"/>
<dbReference type="GlyCosmos" id="O74660">
    <property type="glycosylation" value="4 sites, No reported glycans"/>
</dbReference>
<dbReference type="VEuPathDB" id="FungiDB:C6_03700W_A"/>
<dbReference type="VEuPathDB" id="FungiDB:C6_04130C_A"/>
<dbReference type="VEuPathDB" id="FungiDB:CAWG_04966"/>
<dbReference type="VEuPathDB" id="FungiDB:CAWG_04967"/>
<dbReference type="GO" id="GO:0009986">
    <property type="term" value="C:cell surface"/>
    <property type="evidence" value="ECO:0007669"/>
    <property type="project" value="TreeGrafter"/>
</dbReference>
<dbReference type="GO" id="GO:1903561">
    <property type="term" value="C:extracellular vesicle"/>
    <property type="evidence" value="ECO:0007669"/>
    <property type="project" value="TreeGrafter"/>
</dbReference>
<dbReference type="GO" id="GO:0030446">
    <property type="term" value="C:hyphal cell wall"/>
    <property type="evidence" value="ECO:0007669"/>
    <property type="project" value="TreeGrafter"/>
</dbReference>
<dbReference type="GO" id="GO:0005886">
    <property type="term" value="C:plasma membrane"/>
    <property type="evidence" value="ECO:0007669"/>
    <property type="project" value="UniProtKB-SubCell"/>
</dbReference>
<dbReference type="GO" id="GO:0098552">
    <property type="term" value="C:side of membrane"/>
    <property type="evidence" value="ECO:0007669"/>
    <property type="project" value="UniProtKB-KW"/>
</dbReference>
<dbReference type="GO" id="GO:0030445">
    <property type="term" value="C:yeast-form cell wall"/>
    <property type="evidence" value="ECO:0007669"/>
    <property type="project" value="TreeGrafter"/>
</dbReference>
<dbReference type="GO" id="GO:0043710">
    <property type="term" value="P:cell adhesion involved in multi-species biofilm formation"/>
    <property type="evidence" value="ECO:0007669"/>
    <property type="project" value="TreeGrafter"/>
</dbReference>
<dbReference type="GO" id="GO:0043709">
    <property type="term" value="P:cell adhesion involved in single-species biofilm formation"/>
    <property type="evidence" value="ECO:0007669"/>
    <property type="project" value="TreeGrafter"/>
</dbReference>
<dbReference type="GO" id="GO:0098609">
    <property type="term" value="P:cell-cell adhesion"/>
    <property type="evidence" value="ECO:0007669"/>
    <property type="project" value="TreeGrafter"/>
</dbReference>
<dbReference type="GO" id="GO:0030448">
    <property type="term" value="P:hyphal growth"/>
    <property type="evidence" value="ECO:0007669"/>
    <property type="project" value="TreeGrafter"/>
</dbReference>
<dbReference type="GO" id="GO:0044011">
    <property type="term" value="P:single-species biofilm formation on inanimate substrate"/>
    <property type="evidence" value="ECO:0007669"/>
    <property type="project" value="TreeGrafter"/>
</dbReference>
<dbReference type="FunFam" id="2.60.40.1280:FF:000001">
    <property type="entry name" value="Agglutinin-like protein 3"/>
    <property type="match status" value="1"/>
</dbReference>
<dbReference type="Gene3D" id="2.60.40.1280">
    <property type="match status" value="1"/>
</dbReference>
<dbReference type="Gene3D" id="2.60.40.2430">
    <property type="entry name" value="Agglutinin-like protein, N-terminal domain, N2 subdomain"/>
    <property type="match status" value="1"/>
</dbReference>
<dbReference type="InterPro" id="IPR008966">
    <property type="entry name" value="Adhesion_dom_sf"/>
</dbReference>
<dbReference type="InterPro" id="IPR008440">
    <property type="entry name" value="Agglutinin-like_ALS_rpt"/>
</dbReference>
<dbReference type="InterPro" id="IPR024672">
    <property type="entry name" value="Agglutinin-like_N"/>
</dbReference>
<dbReference type="InterPro" id="IPR043063">
    <property type="entry name" value="Agglutinin-like_N_N2"/>
</dbReference>
<dbReference type="InterPro" id="IPR033504">
    <property type="entry name" value="ALS"/>
</dbReference>
<dbReference type="InterPro" id="IPR011252">
    <property type="entry name" value="Fibrogen-bd_dom1"/>
</dbReference>
<dbReference type="PANTHER" id="PTHR33793:SF2">
    <property type="entry name" value="AGGLUTININ-LIKE PROTEIN 6"/>
    <property type="match status" value="1"/>
</dbReference>
<dbReference type="PANTHER" id="PTHR33793">
    <property type="entry name" value="ALPHA-AGGLUTININ"/>
    <property type="match status" value="1"/>
</dbReference>
<dbReference type="Pfam" id="PF05792">
    <property type="entry name" value="Candida_ALS"/>
    <property type="match status" value="4"/>
</dbReference>
<dbReference type="Pfam" id="PF11766">
    <property type="entry name" value="Candida_ALS_N"/>
    <property type="match status" value="1"/>
</dbReference>
<dbReference type="SMART" id="SM01056">
    <property type="entry name" value="Candida_ALS_N"/>
    <property type="match status" value="1"/>
</dbReference>
<dbReference type="SUPFAM" id="SSF49401">
    <property type="entry name" value="Bacterial adhesins"/>
    <property type="match status" value="1"/>
</dbReference>
<accession>O74660</accession>
<accession>O74661</accession>
<accession>Q9URP8</accession>
<accession>Q9URP9</accession>
<evidence type="ECO:0000250" key="1">
    <source>
        <dbReference type="UniProtKB" id="A0A1D8PQ86"/>
    </source>
</evidence>
<evidence type="ECO:0000250" key="2">
    <source>
        <dbReference type="UniProtKB" id="A0A1D8PQB9"/>
    </source>
</evidence>
<evidence type="ECO:0000255" key="3"/>
<evidence type="ECO:0000255" key="4">
    <source>
        <dbReference type="PROSITE-ProRule" id="PRU00498"/>
    </source>
</evidence>
<evidence type="ECO:0000256" key="5">
    <source>
        <dbReference type="SAM" id="MobiDB-lite"/>
    </source>
</evidence>
<evidence type="ECO:0000269" key="6">
    <source>
    </source>
</evidence>
<evidence type="ECO:0000305" key="7"/>
<gene>
    <name type="primary">ALS4</name>
</gene>
<feature type="signal peptide" evidence="3">
    <location>
        <begin position="1"/>
        <end position="17"/>
    </location>
</feature>
<feature type="chain" id="PRO_0000020694" description="Agglutinin-like protein 4" evidence="3">
    <location>
        <begin position="18"/>
        <end position="852"/>
    </location>
</feature>
<feature type="propeptide" id="PRO_0000439165" description="Removed in mature form" evidence="3">
    <location>
        <begin position="853"/>
        <end position="875"/>
    </location>
</feature>
<feature type="repeat" description="ALS 1">
    <location>
        <begin position="365"/>
        <end position="396"/>
    </location>
</feature>
<feature type="repeat" description="ALS 2">
    <location>
        <begin position="401"/>
        <end position="432"/>
    </location>
</feature>
<feature type="repeat" description="ALS 3">
    <location>
        <begin position="438"/>
        <end position="469"/>
    </location>
</feature>
<feature type="repeat" description="ALS 4">
    <location>
        <begin position="474"/>
        <end position="502"/>
    </location>
</feature>
<feature type="region of interest" description="Disordered" evidence="5">
    <location>
        <begin position="546"/>
        <end position="580"/>
    </location>
</feature>
<feature type="region of interest" description="Disordered" evidence="5">
    <location>
        <begin position="619"/>
        <end position="837"/>
    </location>
</feature>
<feature type="compositionally biased region" description="Low complexity" evidence="5">
    <location>
        <begin position="549"/>
        <end position="578"/>
    </location>
</feature>
<feature type="compositionally biased region" description="Low complexity" evidence="5">
    <location>
        <begin position="627"/>
        <end position="641"/>
    </location>
</feature>
<feature type="compositionally biased region" description="Polar residues" evidence="5">
    <location>
        <begin position="674"/>
        <end position="715"/>
    </location>
</feature>
<feature type="compositionally biased region" description="Low complexity" evidence="5">
    <location>
        <begin position="722"/>
        <end position="746"/>
    </location>
</feature>
<feature type="compositionally biased region" description="Polar residues" evidence="5">
    <location>
        <begin position="755"/>
        <end position="764"/>
    </location>
</feature>
<feature type="compositionally biased region" description="Low complexity" evidence="5">
    <location>
        <begin position="789"/>
        <end position="816"/>
    </location>
</feature>
<feature type="compositionally biased region" description="Low complexity" evidence="5">
    <location>
        <begin position="827"/>
        <end position="837"/>
    </location>
</feature>
<feature type="lipid moiety-binding region" description="GPI-anchor amidated aspartate" evidence="3">
    <location>
        <position position="852"/>
    </location>
</feature>
<feature type="glycosylation site" description="N-linked (GlcNAc...) asparagine" evidence="4">
    <location>
        <position position="542"/>
    </location>
</feature>
<feature type="glycosylation site" description="N-linked (GlcNAc...) asparagine" evidence="4">
    <location>
        <position position="626"/>
    </location>
</feature>
<feature type="glycosylation site" description="N-linked (GlcNAc...) asparagine" evidence="4">
    <location>
        <position position="789"/>
    </location>
</feature>
<feature type="glycosylation site" description="N-linked (GlcNAc...) asparagine" evidence="4">
    <location>
        <position position="811"/>
    </location>
</feature>
<feature type="disulfide bond" evidence="1">
    <location>
        <begin position="73"/>
        <end position="150"/>
    </location>
</feature>
<feature type="disulfide bond" evidence="1">
    <location>
        <begin position="96"/>
        <end position="112"/>
    </location>
</feature>
<feature type="disulfide bond" evidence="1">
    <location>
        <begin position="205"/>
        <end position="298"/>
    </location>
</feature>
<feature type="disulfide bond" evidence="1">
    <location>
        <begin position="227"/>
        <end position="256"/>
    </location>
</feature>
<feature type="sequence variant" description="In allele ALS4-2." evidence="6">
    <original>I</original>
    <variation>M</variation>
    <location>
        <position position="125"/>
    </location>
</feature>
<feature type="sequence variant" description="In allele ALS4-2." evidence="6">
    <original>N</original>
    <variation>S</variation>
    <location>
        <position position="198"/>
    </location>
</feature>
<feature type="sequence variant" description="In allele ALS4-2." evidence="6">
    <original>F</original>
    <variation>Y</variation>
    <location>
        <position position="265"/>
    </location>
</feature>
<feature type="sequence variant" description="In allele ALS4-2." evidence="6">
    <original>I</original>
    <variation>V</variation>
    <location>
        <position position="280"/>
    </location>
</feature>
<feature type="sequence variant" description="In allele ALS4-2." evidence="6">
    <original>I</original>
    <variation>II</variation>
    <location>
        <position position="697"/>
    </location>
</feature>
<feature type="sequence variant" description="In allele ALS4-2." evidence="6">
    <original>STSL</original>
    <variation>GTSS</variation>
    <location>
        <begin position="726"/>
        <end position="729"/>
    </location>
</feature>
<feature type="non-consecutive residues">
    <location>
        <begin position="469"/>
        <end position="470"/>
    </location>
</feature>